<organism>
    <name type="scientific">Thermosynechococcus vestitus (strain NIES-2133 / IAM M-273 / BP-1)</name>
    <dbReference type="NCBI Taxonomy" id="197221"/>
    <lineage>
        <taxon>Bacteria</taxon>
        <taxon>Bacillati</taxon>
        <taxon>Cyanobacteriota</taxon>
        <taxon>Cyanophyceae</taxon>
        <taxon>Acaryochloridales</taxon>
        <taxon>Thermosynechococcaceae</taxon>
        <taxon>Thermosynechococcus</taxon>
    </lineage>
</organism>
<accession>Q8DIS5</accession>
<keyword id="KW-0002">3D-structure</keyword>
<keyword id="KW-1283">Bacterial microcompartment</keyword>
<keyword id="KW-0113">Calvin cycle</keyword>
<keyword id="KW-0120">Carbon dioxide fixation</keyword>
<keyword id="KW-1282">Carboxysome</keyword>
<keyword id="KW-0963">Cytoplasm</keyword>
<keyword id="KW-1015">Disulfide bond</keyword>
<keyword id="KW-0456">Lyase</keyword>
<keyword id="KW-0460">Magnesium</keyword>
<keyword id="KW-0479">Metal-binding</keyword>
<keyword id="KW-0503">Monooxygenase</keyword>
<keyword id="KW-0560">Oxidoreductase</keyword>
<keyword id="KW-0601">Photorespiration</keyword>
<keyword id="KW-0602">Photosynthesis</keyword>
<keyword id="KW-1185">Reference proteome</keyword>
<sequence>MAYTQSKSQKVGYQAGVKDYRLTYYTPDYTPKDTDILAAFRVTPQPGVPFEEAAAAVAAESSTGTWTTVWTDLLTDLDRYKGCCYDIEPLPGEDNQFIAYIAYPLDLFEEGSVTNMLTSIVGNVFGFKALKALRLEDLRIPVAYLKTFQGPPHGIQVERDKLNKYGRPLLGCTIKPKLGLSAKNYGRAVYECLRGGLDFTKDDENINSQPFQRWRDRFLFVADAIHKAQAETGEIKGHYLNVTAPTCEEMLKRAEFAKELEMPIIMHDFLTAGFTANTTLSKWCRDNGMLLHIHRAMHAVMDRQKNHGIHFRVLAKCLRMSGGDHIHTGTVVGKLEGDKAVTLGFVDLLRENYIEQDRSRGIYFTQDWASMPGVMAVASGGIHVWHMPALVDIFGDDAVLQFGGGTLGHPWGNAPGATANRVALEACIQARNEGRDLMREGGDIIREAARWSPELAAACELWKEIKFEFEAQDTI</sequence>
<proteinExistence type="evidence at protein level"/>
<name>RBL_THEVB</name>
<evidence type="ECO:0000250" key="1">
    <source>
        <dbReference type="UniProtKB" id="P00879"/>
    </source>
</evidence>
<evidence type="ECO:0000255" key="2">
    <source>
        <dbReference type="HAMAP-Rule" id="MF_01338"/>
    </source>
</evidence>
<evidence type="ECO:0000269" key="3">
    <source>
    </source>
</evidence>
<evidence type="ECO:0000269" key="4">
    <source ref="4"/>
</evidence>
<evidence type="ECO:0000305" key="5">
    <source>
    </source>
</evidence>
<evidence type="ECO:0000305" key="6">
    <source>
    </source>
</evidence>
<evidence type="ECO:0007744" key="7">
    <source>
        <dbReference type="PDB" id="2YBV"/>
    </source>
</evidence>
<evidence type="ECO:0007744" key="8">
    <source>
        <dbReference type="PDB" id="3ZXW"/>
    </source>
</evidence>
<evidence type="ECO:0007829" key="9">
    <source>
        <dbReference type="PDB" id="3ZXW"/>
    </source>
</evidence>
<dbReference type="EC" id="4.1.1.39" evidence="2 3"/>
<dbReference type="EMBL" id="BA000039">
    <property type="protein sequence ID" value="BAC09058.1"/>
    <property type="molecule type" value="Genomic_DNA"/>
</dbReference>
<dbReference type="RefSeq" id="NP_682296.1">
    <property type="nucleotide sequence ID" value="NC_004113.1"/>
</dbReference>
<dbReference type="RefSeq" id="WP_011057346.1">
    <property type="nucleotide sequence ID" value="NC_004113.1"/>
</dbReference>
<dbReference type="PDB" id="2YBV">
    <property type="method" value="X-ray"/>
    <property type="resolution" value="2.30 A"/>
    <property type="chains" value="A/C/E/G/I/K/M/O=1-475"/>
</dbReference>
<dbReference type="PDB" id="3ZXW">
    <property type="method" value="X-ray"/>
    <property type="resolution" value="2.10 A"/>
    <property type="chains" value="A/C/E/G=1-475"/>
</dbReference>
<dbReference type="PDB" id="6EKC">
    <property type="method" value="X-ray"/>
    <property type="resolution" value="2.63 A"/>
    <property type="chains" value="A1/A2/A3/A4/A5/A6/A7/A8/C1/C2/C3/C4/C5/C6/C7/C8/E1/E2/E3/E4/E5/E6/E7/E8/G1/G2/G3/G4/G5/G6=1-475"/>
</dbReference>
<dbReference type="PDBsum" id="2YBV"/>
<dbReference type="PDBsum" id="3ZXW"/>
<dbReference type="PDBsum" id="6EKC"/>
<dbReference type="SMR" id="Q8DIS5"/>
<dbReference type="IntAct" id="Q8DIS5">
    <property type="interactions" value="1"/>
</dbReference>
<dbReference type="MINT" id="Q8DIS5"/>
<dbReference type="STRING" id="197221.gene:10748106"/>
<dbReference type="EnsemblBacteria" id="BAC09058">
    <property type="protein sequence ID" value="BAC09058"/>
    <property type="gene ID" value="BAC09058"/>
</dbReference>
<dbReference type="KEGG" id="tel:tll1506"/>
<dbReference type="PATRIC" id="fig|197221.4.peg.1580"/>
<dbReference type="eggNOG" id="COG1850">
    <property type="taxonomic scope" value="Bacteria"/>
</dbReference>
<dbReference type="EvolutionaryTrace" id="Q8DIS5"/>
<dbReference type="Proteomes" id="UP000000440">
    <property type="component" value="Chromosome"/>
</dbReference>
<dbReference type="GO" id="GO:0031470">
    <property type="term" value="C:carboxysome"/>
    <property type="evidence" value="ECO:0007669"/>
    <property type="project" value="UniProtKB-SubCell"/>
</dbReference>
<dbReference type="GO" id="GO:0005737">
    <property type="term" value="C:cytoplasm"/>
    <property type="evidence" value="ECO:0007669"/>
    <property type="project" value="UniProtKB-SubCell"/>
</dbReference>
<dbReference type="GO" id="GO:0000287">
    <property type="term" value="F:magnesium ion binding"/>
    <property type="evidence" value="ECO:0007669"/>
    <property type="project" value="UniProtKB-UniRule"/>
</dbReference>
<dbReference type="GO" id="GO:0004497">
    <property type="term" value="F:monooxygenase activity"/>
    <property type="evidence" value="ECO:0007669"/>
    <property type="project" value="UniProtKB-KW"/>
</dbReference>
<dbReference type="GO" id="GO:0016984">
    <property type="term" value="F:ribulose-bisphosphate carboxylase activity"/>
    <property type="evidence" value="ECO:0007669"/>
    <property type="project" value="UniProtKB-UniRule"/>
</dbReference>
<dbReference type="GO" id="GO:0009853">
    <property type="term" value="P:photorespiration"/>
    <property type="evidence" value="ECO:0007669"/>
    <property type="project" value="UniProtKB-KW"/>
</dbReference>
<dbReference type="GO" id="GO:0019253">
    <property type="term" value="P:reductive pentose-phosphate cycle"/>
    <property type="evidence" value="ECO:0007669"/>
    <property type="project" value="UniProtKB-UniRule"/>
</dbReference>
<dbReference type="CDD" id="cd08212">
    <property type="entry name" value="RuBisCO_large_I"/>
    <property type="match status" value="1"/>
</dbReference>
<dbReference type="Gene3D" id="3.20.20.110">
    <property type="entry name" value="Ribulose bisphosphate carboxylase, large subunit, C-terminal domain"/>
    <property type="match status" value="1"/>
</dbReference>
<dbReference type="Gene3D" id="3.30.70.150">
    <property type="entry name" value="RuBisCO large subunit, N-terminal domain"/>
    <property type="match status" value="1"/>
</dbReference>
<dbReference type="HAMAP" id="MF_01338">
    <property type="entry name" value="RuBisCO_L_type1"/>
    <property type="match status" value="1"/>
</dbReference>
<dbReference type="InterPro" id="IPR033966">
    <property type="entry name" value="RuBisCO"/>
</dbReference>
<dbReference type="InterPro" id="IPR020878">
    <property type="entry name" value="RuBisCo_large_chain_AS"/>
</dbReference>
<dbReference type="InterPro" id="IPR000685">
    <property type="entry name" value="RuBisCO_lsu_C"/>
</dbReference>
<dbReference type="InterPro" id="IPR036376">
    <property type="entry name" value="RuBisCO_lsu_C_sf"/>
</dbReference>
<dbReference type="InterPro" id="IPR017443">
    <property type="entry name" value="RuBisCO_lsu_fd_N"/>
</dbReference>
<dbReference type="InterPro" id="IPR036422">
    <property type="entry name" value="RuBisCO_lsu_N_sf"/>
</dbReference>
<dbReference type="InterPro" id="IPR020888">
    <property type="entry name" value="RuBisCO_lsuI"/>
</dbReference>
<dbReference type="NCBIfam" id="NF003252">
    <property type="entry name" value="PRK04208.1"/>
    <property type="match status" value="1"/>
</dbReference>
<dbReference type="PANTHER" id="PTHR42704">
    <property type="entry name" value="RIBULOSE BISPHOSPHATE CARBOXYLASE"/>
    <property type="match status" value="1"/>
</dbReference>
<dbReference type="PANTHER" id="PTHR42704:SF17">
    <property type="entry name" value="RIBULOSE BISPHOSPHATE CARBOXYLASE LARGE CHAIN"/>
    <property type="match status" value="1"/>
</dbReference>
<dbReference type="Pfam" id="PF00016">
    <property type="entry name" value="RuBisCO_large"/>
    <property type="match status" value="1"/>
</dbReference>
<dbReference type="Pfam" id="PF02788">
    <property type="entry name" value="RuBisCO_large_N"/>
    <property type="match status" value="1"/>
</dbReference>
<dbReference type="SFLD" id="SFLDG01052">
    <property type="entry name" value="RuBisCO"/>
    <property type="match status" value="1"/>
</dbReference>
<dbReference type="SFLD" id="SFLDS00014">
    <property type="entry name" value="RuBisCO"/>
    <property type="match status" value="1"/>
</dbReference>
<dbReference type="SFLD" id="SFLDG00301">
    <property type="entry name" value="RuBisCO-like_proteins"/>
    <property type="match status" value="1"/>
</dbReference>
<dbReference type="SUPFAM" id="SSF51649">
    <property type="entry name" value="RuBisCo, C-terminal domain"/>
    <property type="match status" value="1"/>
</dbReference>
<dbReference type="SUPFAM" id="SSF54966">
    <property type="entry name" value="RuBisCO, large subunit, small (N-terminal) domain"/>
    <property type="match status" value="1"/>
</dbReference>
<dbReference type="PROSITE" id="PS00157">
    <property type="entry name" value="RUBISCO_LARGE"/>
    <property type="match status" value="1"/>
</dbReference>
<protein>
    <recommendedName>
        <fullName evidence="2">Ribulose bisphosphate carboxylase large chain</fullName>
        <shortName evidence="2">RuBisCO large subunit</shortName>
        <ecNumber evidence="2 3">4.1.1.39</ecNumber>
    </recommendedName>
</protein>
<feature type="chain" id="PRO_0000062649" description="Ribulose bisphosphate carboxylase large chain">
    <location>
        <begin position="1"/>
        <end position="475"/>
    </location>
</feature>
<feature type="active site" description="Proton acceptor" evidence="2">
    <location>
        <position position="175"/>
    </location>
</feature>
<feature type="active site" description="Proton acceptor" evidence="2">
    <location>
        <position position="294"/>
    </location>
</feature>
<feature type="binding site" description="in homodimeric partner" evidence="2">
    <location>
        <position position="123"/>
    </location>
    <ligand>
        <name>substrate</name>
    </ligand>
</feature>
<feature type="binding site" evidence="2">
    <location>
        <position position="173"/>
    </location>
    <ligand>
        <name>substrate</name>
    </ligand>
</feature>
<feature type="binding site" evidence="2">
    <location>
        <position position="177"/>
    </location>
    <ligand>
        <name>substrate</name>
    </ligand>
</feature>
<feature type="binding site" description="via carbamate group" evidence="2">
    <location>
        <position position="201"/>
    </location>
    <ligand>
        <name>Mg(2+)</name>
        <dbReference type="ChEBI" id="CHEBI:18420"/>
    </ligand>
</feature>
<feature type="binding site" evidence="2">
    <location>
        <position position="203"/>
    </location>
    <ligand>
        <name>Mg(2+)</name>
        <dbReference type="ChEBI" id="CHEBI:18420"/>
    </ligand>
</feature>
<feature type="binding site" evidence="2">
    <location>
        <position position="204"/>
    </location>
    <ligand>
        <name>Mg(2+)</name>
        <dbReference type="ChEBI" id="CHEBI:18420"/>
    </ligand>
</feature>
<feature type="binding site" evidence="2">
    <location>
        <position position="295"/>
    </location>
    <ligand>
        <name>substrate</name>
    </ligand>
</feature>
<feature type="binding site" evidence="2">
    <location>
        <position position="327"/>
    </location>
    <ligand>
        <name>substrate</name>
    </ligand>
</feature>
<feature type="binding site" evidence="2">
    <location>
        <position position="379"/>
    </location>
    <ligand>
        <name>substrate</name>
    </ligand>
</feature>
<feature type="site" description="Transition state stabilizer" evidence="2">
    <location>
        <position position="334"/>
    </location>
</feature>
<feature type="modified residue" description="N6-carboxylysine" evidence="2">
    <location>
        <position position="201"/>
    </location>
</feature>
<feature type="disulfide bond" description="Interchain; in linked form" evidence="2 4 7 8">
    <location>
        <position position="247"/>
    </location>
</feature>
<feature type="helix" evidence="9">
    <location>
        <begin position="21"/>
        <end position="24"/>
    </location>
</feature>
<feature type="strand" evidence="9">
    <location>
        <begin position="35"/>
        <end position="44"/>
    </location>
</feature>
<feature type="helix" evidence="9">
    <location>
        <begin position="50"/>
        <end position="60"/>
    </location>
</feature>
<feature type="turn" evidence="9">
    <location>
        <begin position="61"/>
        <end position="63"/>
    </location>
</feature>
<feature type="strand" evidence="9">
    <location>
        <begin position="66"/>
        <end position="68"/>
    </location>
</feature>
<feature type="helix" evidence="9">
    <location>
        <begin position="70"/>
        <end position="74"/>
    </location>
</feature>
<feature type="helix" evidence="9">
    <location>
        <begin position="77"/>
        <end position="80"/>
    </location>
</feature>
<feature type="strand" evidence="9">
    <location>
        <begin position="83"/>
        <end position="89"/>
    </location>
</feature>
<feature type="strand" evidence="9">
    <location>
        <begin position="93"/>
        <end position="95"/>
    </location>
</feature>
<feature type="strand" evidence="9">
    <location>
        <begin position="97"/>
        <end position="103"/>
    </location>
</feature>
<feature type="helix" evidence="9">
    <location>
        <begin position="105"/>
        <end position="107"/>
    </location>
</feature>
<feature type="helix" evidence="9">
    <location>
        <begin position="113"/>
        <end position="121"/>
    </location>
</feature>
<feature type="helix" evidence="9">
    <location>
        <begin position="124"/>
        <end position="126"/>
    </location>
</feature>
<feature type="strand" evidence="9">
    <location>
        <begin position="130"/>
        <end position="139"/>
    </location>
</feature>
<feature type="helix" evidence="9">
    <location>
        <begin position="142"/>
        <end position="145"/>
    </location>
</feature>
<feature type="helix" evidence="9">
    <location>
        <begin position="155"/>
        <end position="162"/>
    </location>
</feature>
<feature type="strand" evidence="9">
    <location>
        <begin position="169"/>
        <end position="173"/>
    </location>
</feature>
<feature type="strand" evidence="9">
    <location>
        <begin position="175"/>
        <end position="178"/>
    </location>
</feature>
<feature type="helix" evidence="9">
    <location>
        <begin position="182"/>
        <end position="194"/>
    </location>
</feature>
<feature type="strand" evidence="9">
    <location>
        <begin position="198"/>
        <end position="201"/>
    </location>
</feature>
<feature type="strand" evidence="9">
    <location>
        <begin position="207"/>
        <end position="209"/>
    </location>
</feature>
<feature type="helix" evidence="9">
    <location>
        <begin position="214"/>
        <end position="232"/>
    </location>
</feature>
<feature type="strand" evidence="9">
    <location>
        <begin position="237"/>
        <end position="241"/>
    </location>
</feature>
<feature type="helix" evidence="9">
    <location>
        <begin position="247"/>
        <end position="259"/>
    </location>
</feature>
<feature type="strand" evidence="9">
    <location>
        <begin position="263"/>
        <end position="268"/>
    </location>
</feature>
<feature type="helix" evidence="9">
    <location>
        <begin position="269"/>
        <end position="272"/>
    </location>
</feature>
<feature type="helix" evidence="9">
    <location>
        <begin position="274"/>
        <end position="287"/>
    </location>
</feature>
<feature type="strand" evidence="9">
    <location>
        <begin position="290"/>
        <end position="294"/>
    </location>
</feature>
<feature type="helix" evidence="9">
    <location>
        <begin position="298"/>
        <end position="302"/>
    </location>
</feature>
<feature type="strand" evidence="9">
    <location>
        <begin position="305"/>
        <end position="309"/>
    </location>
</feature>
<feature type="helix" evidence="9">
    <location>
        <begin position="311"/>
        <end position="321"/>
    </location>
</feature>
<feature type="strand" evidence="9">
    <location>
        <begin position="324"/>
        <end position="327"/>
    </location>
</feature>
<feature type="strand" evidence="9">
    <location>
        <begin position="331"/>
        <end position="335"/>
    </location>
</feature>
<feature type="helix" evidence="9">
    <location>
        <begin position="339"/>
        <end position="350"/>
    </location>
</feature>
<feature type="strand" evidence="9">
    <location>
        <begin position="352"/>
        <end position="354"/>
    </location>
</feature>
<feature type="helix" evidence="9">
    <location>
        <begin position="358"/>
        <end position="360"/>
    </location>
</feature>
<feature type="strand" evidence="9">
    <location>
        <begin position="375"/>
        <end position="381"/>
    </location>
</feature>
<feature type="helix" evidence="9">
    <location>
        <begin position="384"/>
        <end position="386"/>
    </location>
</feature>
<feature type="helix" evidence="9">
    <location>
        <begin position="387"/>
        <end position="394"/>
    </location>
</feature>
<feature type="strand" evidence="9">
    <location>
        <begin position="396"/>
        <end position="401"/>
    </location>
</feature>
<feature type="helix" evidence="9">
    <location>
        <begin position="404"/>
        <end position="407"/>
    </location>
</feature>
<feature type="helix" evidence="9">
    <location>
        <begin position="413"/>
        <end position="431"/>
    </location>
</feature>
<feature type="turn" evidence="9">
    <location>
        <begin position="432"/>
        <end position="434"/>
    </location>
</feature>
<feature type="turn" evidence="9">
    <location>
        <begin position="437"/>
        <end position="439"/>
    </location>
</feature>
<feature type="helix" evidence="9">
    <location>
        <begin position="441"/>
        <end position="451"/>
    </location>
</feature>
<feature type="helix" evidence="9">
    <location>
        <begin position="453"/>
        <end position="462"/>
    </location>
</feature>
<reference key="1">
    <citation type="journal article" date="2002" name="DNA Res.">
        <title>Complete genome structure of the thermophilic cyanobacterium Thermosynechococcus elongatus BP-1.</title>
        <authorList>
            <person name="Nakamura Y."/>
            <person name="Kaneko T."/>
            <person name="Sato S."/>
            <person name="Ikeuchi M."/>
            <person name="Katoh H."/>
            <person name="Sasamoto S."/>
            <person name="Watanabe A."/>
            <person name="Iriguchi M."/>
            <person name="Kawashima K."/>
            <person name="Kimura T."/>
            <person name="Kishida Y."/>
            <person name="Kiyokawa C."/>
            <person name="Kohara M."/>
            <person name="Matsumoto M."/>
            <person name="Matsuno A."/>
            <person name="Nakazaki N."/>
            <person name="Shimpo S."/>
            <person name="Sugimoto M."/>
            <person name="Takeuchi C."/>
            <person name="Yamada M."/>
            <person name="Tabata S."/>
        </authorList>
    </citation>
    <scope>NUCLEOTIDE SEQUENCE [LARGE SCALE GENOMIC DNA]</scope>
    <source>
        <strain>NIES-2133 / IAM M-273 / BP-1</strain>
    </source>
</reference>
<reference key="2">
    <citation type="journal article" date="2008" name="Acta Biochim. Pol.">
        <title>Heterologous expression and initial characterization of recombinant RbcX protein from Thermosynechococcus elongatus BP-1 and the role of RbcX in RuBisCO assembly.</title>
        <authorList>
            <person name="Tarnawski M."/>
            <person name="Gubernator B."/>
            <person name="Kolesinski P."/>
            <person name="Szczepaniak A."/>
        </authorList>
    </citation>
    <scope>RUBISCO FOLDING AND ASSEMBLY</scope>
    <scope>SUBUNIT</scope>
    <scope>SUBCELLULAR LOCATION</scope>
    <source>
        <strain>NIES-2133 / IAM M-273 / BP-1</strain>
    </source>
</reference>
<reference key="3">
    <citation type="journal article" date="2014" name="FEBS J.">
        <title>Rubisco Accumulation Factor 1 from Thermosynechococcus elongatus participates in the final stages of ribulose-1,5-bisphosphate carboxylase/oxygenase assembly in Escherichia coli cells and in vitro.</title>
        <authorList>
            <person name="Kolesinski P."/>
            <person name="Belusiak I."/>
            <person name="Czarnocki-Cieciura M."/>
            <person name="Szczepaniak A."/>
        </authorList>
    </citation>
    <scope>FUNCTION</scope>
    <scope>RUBISCO FOLDING AND ASSEMBLY</scope>
    <scope>INTERACTION WITH RAF1</scope>
    <scope>SUBUNIT</scope>
    <scope>SUBCELLULAR LOCATION</scope>
    <source>
        <strain>NIES-2133 / IAM M-273 / BP-1</strain>
    </source>
</reference>
<reference evidence="7 8" key="4">
    <citation type="submission" date="2011-03" db="PDB data bank">
        <title>Structure of Ribulose-1,5-Bisphosphate Carboxylase Oxygenase from Thermosynechococcus Elongatus.</title>
        <authorList>
            <person name="Terlecka B."/>
            <person name="Wilhelmi V."/>
            <person name="Bialek W."/>
            <person name="Gubernator B."/>
            <person name="Szczepaniak A."/>
            <person name="Hofmann E."/>
        </authorList>
    </citation>
    <scope>X-RAY CRYSTALLOGRAPHY (2.30 ANGSTROMS)</scope>
    <scope>SUBUNIT</scope>
    <scope>DISULFIDE BOND</scope>
    <source>
        <strain>NIES-2133 / IAM M-273 / BP-1</strain>
    </source>
</reference>
<comment type="function">
    <text evidence="2">RuBisCO catalyzes two reactions: the carboxylation of D-ribulose 1,5-bisphosphate, the primary event in carbon dioxide fixation, as well as the oxidative fragmentation of the pentose substrate in the photorespiration process. Both reactions occur simultaneously and in competition at the same active site.</text>
</comment>
<comment type="catalytic activity">
    <reaction evidence="2 3">
        <text>2 (2R)-3-phosphoglycerate + 2 H(+) = D-ribulose 1,5-bisphosphate + CO2 + H2O</text>
        <dbReference type="Rhea" id="RHEA:23124"/>
        <dbReference type="ChEBI" id="CHEBI:15377"/>
        <dbReference type="ChEBI" id="CHEBI:15378"/>
        <dbReference type="ChEBI" id="CHEBI:16526"/>
        <dbReference type="ChEBI" id="CHEBI:57870"/>
        <dbReference type="ChEBI" id="CHEBI:58272"/>
        <dbReference type="EC" id="4.1.1.39"/>
    </reaction>
</comment>
<comment type="catalytic activity">
    <reaction evidence="2">
        <text>D-ribulose 1,5-bisphosphate + O2 = 2-phosphoglycolate + (2R)-3-phosphoglycerate + 2 H(+)</text>
        <dbReference type="Rhea" id="RHEA:36631"/>
        <dbReference type="ChEBI" id="CHEBI:15378"/>
        <dbReference type="ChEBI" id="CHEBI:15379"/>
        <dbReference type="ChEBI" id="CHEBI:57870"/>
        <dbReference type="ChEBI" id="CHEBI:58033"/>
        <dbReference type="ChEBI" id="CHEBI:58272"/>
    </reaction>
</comment>
<comment type="cofactor">
    <cofactor evidence="2">
        <name>Mg(2+)</name>
        <dbReference type="ChEBI" id="CHEBI:18420"/>
    </cofactor>
    <text evidence="2">Binds 1 Mg(2+) ion per subunit.</text>
</comment>
<comment type="subunit">
    <text evidence="3 4">Heterohexadecamer of 8 large chains and 8 small chains; disulfide-linked (PubMed:25041569, Ref.4). The disulfide link is formed within the large subunit homodimers (Ref.4). Interacts with assembly factor Raf1 which helps form the holoenzyme, most interaction (and folding) occurs in the cytoplasm (PubMed:25041569).</text>
</comment>
<comment type="interaction">
    <interactant intactId="EBI-9639313">
        <id>Q8DIS5</id>
    </interactant>
    <interactant intactId="EBI-9639332">
        <id>Q8DI26</id>
        <label>raf1</label>
    </interactant>
    <organismsDiffer>false</organismsDiffer>
    <experiments>2</experiments>
</comment>
<comment type="subcellular location">
    <subcellularLocation>
        <location evidence="2 3">Carboxysome</location>
    </subcellularLocation>
    <subcellularLocation>
        <location evidence="3">Cytoplasm</location>
    </subcellularLocation>
</comment>
<comment type="PTM">
    <text evidence="2">The disulfide bond which can form in the large chain dimeric partners within the hexadecamer appears to be associated with oxidative stress and protein turnover.</text>
</comment>
<comment type="miscellaneous">
    <text evidence="1 5 6">RuBisCO folding and assembly commences when the nascent large subunit folds with the help of chaperonin GroEL-GroES. Both RbcX and Raf1 help folded RbcL release from the chaperonin and dimerize (Probable). Dimeric Raf1 binds to RbcL(2) leading to an RbcL8-Raf1(8) complex. RbcS displaces Raf1, resulting in holoenzyme formation (By similarity).</text>
</comment>
<comment type="miscellaneous">
    <text evidence="2 3 4">The basic functional RuBisCO is composed of a large chain homodimer in a 'head-to-tail' conformation. In form I RuBisCO this homodimer is arranged in a barrel-like tetramer with the small subunits forming a tetrameric 'cap' on each end of the 'barrel'.</text>
</comment>
<comment type="similarity">
    <text evidence="2">Belongs to the RuBisCO large chain family. Type I subfamily.</text>
</comment>
<gene>
    <name evidence="2" type="primary">cbbL</name>
    <name evidence="2" type="synonym">rbcL</name>
    <name type="ordered locus">tll1506</name>
</gene>